<dbReference type="GO" id="GO:0005576">
    <property type="term" value="C:extracellular region"/>
    <property type="evidence" value="ECO:0007669"/>
    <property type="project" value="UniProtKB-SubCell"/>
</dbReference>
<dbReference type="GO" id="GO:0016020">
    <property type="term" value="C:membrane"/>
    <property type="evidence" value="ECO:0007669"/>
    <property type="project" value="UniProtKB-KW"/>
</dbReference>
<dbReference type="GO" id="GO:0044218">
    <property type="term" value="C:other organism cell membrane"/>
    <property type="evidence" value="ECO:0007669"/>
    <property type="project" value="UniProtKB-KW"/>
</dbReference>
<dbReference type="GO" id="GO:0098542">
    <property type="term" value="P:defense response to other organism"/>
    <property type="evidence" value="ECO:0007669"/>
    <property type="project" value="InterPro"/>
</dbReference>
<dbReference type="InterPro" id="IPR012523">
    <property type="entry name" value="Antimicrobial_4"/>
</dbReference>
<dbReference type="Pfam" id="PF08024">
    <property type="entry name" value="Antimicrobial_4"/>
    <property type="match status" value="1"/>
</dbReference>
<accession>P0DV15</accession>
<feature type="peptide" id="PRO_0000454516" description="M-poneritoxin-Nc1a" evidence="1">
    <location>
        <begin position="1"/>
        <end position="23"/>
    </location>
</feature>
<protein>
    <recommendedName>
        <fullName evidence="2">M-poneritoxin-Nc1a</fullName>
        <shortName evidence="2">M-PONTX-Nc1a</shortName>
    </recommendedName>
    <alternativeName>
        <fullName evidence="3">Poneratoxin</fullName>
    </alternativeName>
    <alternativeName>
        <fullName evidence="2">Ponericin Nc1a</fullName>
    </alternativeName>
</protein>
<sequence>FWGAAAKMLGKALPGLISMFQKN</sequence>
<organism>
    <name type="scientific">Neoponera commutata</name>
    <name type="common">Large hunting ant</name>
    <name type="synonym">Pachycondyla commutata</name>
    <dbReference type="NCBI Taxonomy" id="613619"/>
    <lineage>
        <taxon>Eukaryota</taxon>
        <taxon>Metazoa</taxon>
        <taxon>Ecdysozoa</taxon>
        <taxon>Arthropoda</taxon>
        <taxon>Hexapoda</taxon>
        <taxon>Insecta</taxon>
        <taxon>Pterygota</taxon>
        <taxon>Neoptera</taxon>
        <taxon>Endopterygota</taxon>
        <taxon>Hymenoptera</taxon>
        <taxon>Apocrita</taxon>
        <taxon>Aculeata</taxon>
        <taxon>Formicoidea</taxon>
        <taxon>Formicidae</taxon>
        <taxon>Ponerinae</taxon>
        <taxon>Ponerini</taxon>
        <taxon>Pachycondyla</taxon>
    </lineage>
</organism>
<keyword id="KW-0903">Direct protein sequencing</keyword>
<keyword id="KW-0472">Membrane</keyword>
<keyword id="KW-0964">Secreted</keyword>
<keyword id="KW-1052">Target cell membrane</keyword>
<keyword id="KW-1053">Target membrane</keyword>
<reference key="1">
    <citation type="journal article" date="2021" name="Biochem. Pharmacol.">
        <title>Multipurpose peptides: the venoms of Amazonian stinging ants contain anthelmintic ponericins with diverse predatory and defensive activities.</title>
        <authorList>
            <person name="Nixon S.A."/>
            <person name="Robinson S.D."/>
            <person name="Agwa A.J."/>
            <person name="Walker A.A."/>
            <person name="Choudhary S."/>
            <person name="Touchard A."/>
            <person name="Undheim E.A.B."/>
            <person name="Robertson A."/>
            <person name="Vetter I."/>
            <person name="Schroeder C.I."/>
            <person name="Kotze A.C."/>
            <person name="Herzig V."/>
            <person name="King G.F."/>
        </authorList>
    </citation>
    <scope>PROTEIN SEQUENCE</scope>
    <scope>FUNCTION</scope>
    <scope>SUBCELLULAR LOCATION</scope>
    <scope>MASS SPECTROMETRY</scope>
    <scope>SYNTHESIS</scope>
    <scope>TOXIC DOSE</scope>
    <scope>BIOASSAY</scope>
    <source>
        <tissue>Venom</tissue>
    </source>
</reference>
<proteinExistence type="evidence at protein level"/>
<evidence type="ECO:0000269" key="1">
    <source>
    </source>
</evidence>
<evidence type="ECO:0000303" key="2">
    <source>
    </source>
</evidence>
<evidence type="ECO:0000305" key="3"/>
<evidence type="ECO:0000305" key="4">
    <source>
    </source>
</evidence>
<name>WTX1A_NEOCU</name>
<comment type="function">
    <text evidence="1">Membrane-perturbating peptide with multiple activities (PubMed:34302796). It is insecticidal, since it induces contractile paralysis in insects (L.cuprina) during several hours, and death after 24 hours (PubMed:34302796). It shows antibacterial activity with higher activity against Gram-positive than Gram-negative bacteria (PubMed:34302796). It is also antiparasitic, since it potently inhibits the larval development of the major pathogenic nematode of ruminants (H.contortus, IC(50)=5.1 uM), but fails to reduce the motility of adult males of the other nematode B.malayi (PubMed:34302796). It also shows cytotoxic activity against HEK293 cells (EC(50)=12-14 uM) and induces hemolysis in human erythrocytes (EC(50)=28.6-48.2 uM) (PubMed:34302796). In addition, it causes an important increase in intracellular calcium concentration on neuronal and epithelial cell lines, which supports a non-specific membrane perturbation mechanism of action (PubMed:34302796). In vivo, it induces pain by intraplantar injection into mice, suggesting a defensive function against vertebrate predators (PubMed:34302796).</text>
</comment>
<comment type="subcellular location">
    <subcellularLocation>
        <location evidence="1">Secreted</location>
    </subcellularLocation>
    <subcellularLocation>
        <location evidence="4">Target cell membrane</location>
    </subcellularLocation>
    <text evidence="4">Adopts an alpha-helical conformation in membrane-mimetic environments.</text>
</comment>
<comment type="tissue specificity">
    <text evidence="4">Expressed by the venom gland.</text>
</comment>
<comment type="mass spectrometry">
    <text>Monoisotopic mass.</text>
</comment>
<comment type="toxic dose">
    <text evidence="1">PD(50) is 31.4 nmol/g 1 hour after injection into L.cuprina. LD(50) is 32.6 nmol/g 24 hours after injection into L.cuprina.</text>
</comment>
<comment type="similarity">
    <text evidence="3">Belongs to the non-disulfide-bridged peptide (NDBP) superfamily. Medium-length antimicrobial peptide (group 3) family. Ponericin-W subfamily.</text>
</comment>